<proteinExistence type="inferred from homology"/>
<protein>
    <recommendedName>
        <fullName evidence="1">Carbamoyl phosphate synthase small chain</fullName>
        <ecNumber evidence="1">6.3.5.5</ecNumber>
    </recommendedName>
    <alternativeName>
        <fullName evidence="1">Carbamoyl phosphate synthetase glutamine chain</fullName>
    </alternativeName>
</protein>
<gene>
    <name evidence="1" type="primary">carA</name>
    <name type="ordered locus">MAP_1118</name>
</gene>
<organism>
    <name type="scientific">Mycolicibacterium paratuberculosis (strain ATCC BAA-968 / K-10)</name>
    <name type="common">Mycobacterium paratuberculosis</name>
    <dbReference type="NCBI Taxonomy" id="262316"/>
    <lineage>
        <taxon>Bacteria</taxon>
        <taxon>Bacillati</taxon>
        <taxon>Actinomycetota</taxon>
        <taxon>Actinomycetes</taxon>
        <taxon>Mycobacteriales</taxon>
        <taxon>Mycobacteriaceae</taxon>
        <taxon>Mycobacterium</taxon>
        <taxon>Mycobacterium avium complex (MAC)</taxon>
    </lineage>
</organism>
<name>CARA_MYCPA</name>
<reference key="1">
    <citation type="journal article" date="2005" name="Proc. Natl. Acad. Sci. U.S.A.">
        <title>The complete genome sequence of Mycobacterium avium subspecies paratuberculosis.</title>
        <authorList>
            <person name="Li L."/>
            <person name="Bannantine J.P."/>
            <person name="Zhang Q."/>
            <person name="Amonsin A."/>
            <person name="May B.J."/>
            <person name="Alt D."/>
            <person name="Banerji N."/>
            <person name="Kanjilal S."/>
            <person name="Kapur V."/>
        </authorList>
    </citation>
    <scope>NUCLEOTIDE SEQUENCE [LARGE SCALE GENOMIC DNA]</scope>
    <source>
        <strain>ATCC BAA-968 / K-10</strain>
    </source>
</reference>
<dbReference type="EC" id="6.3.5.5" evidence="1"/>
<dbReference type="EMBL" id="AE016958">
    <property type="protein sequence ID" value="AAS03435.1"/>
    <property type="molecule type" value="Genomic_DNA"/>
</dbReference>
<dbReference type="RefSeq" id="WP_003872561.1">
    <property type="nucleotide sequence ID" value="NZ_CP106873.1"/>
</dbReference>
<dbReference type="SMR" id="Q741H2"/>
<dbReference type="STRING" id="262316.MAP_1118"/>
<dbReference type="KEGG" id="mpa:MAP_1118"/>
<dbReference type="PATRIC" id="fig|262316.17.peg.1177"/>
<dbReference type="eggNOG" id="COG0505">
    <property type="taxonomic scope" value="Bacteria"/>
</dbReference>
<dbReference type="HOGENOM" id="CLU_035901_2_1_11"/>
<dbReference type="UniPathway" id="UPA00068">
    <property type="reaction ID" value="UER00171"/>
</dbReference>
<dbReference type="UniPathway" id="UPA00070">
    <property type="reaction ID" value="UER00115"/>
</dbReference>
<dbReference type="Proteomes" id="UP000000580">
    <property type="component" value="Chromosome"/>
</dbReference>
<dbReference type="GO" id="GO:0005524">
    <property type="term" value="F:ATP binding"/>
    <property type="evidence" value="ECO:0007669"/>
    <property type="project" value="UniProtKB-UniRule"/>
</dbReference>
<dbReference type="GO" id="GO:0004088">
    <property type="term" value="F:carbamoyl-phosphate synthase (glutamine-hydrolyzing) activity"/>
    <property type="evidence" value="ECO:0007669"/>
    <property type="project" value="UniProtKB-UniRule"/>
</dbReference>
<dbReference type="GO" id="GO:0004359">
    <property type="term" value="F:glutaminase activity"/>
    <property type="evidence" value="ECO:0007669"/>
    <property type="project" value="RHEA"/>
</dbReference>
<dbReference type="GO" id="GO:0006207">
    <property type="term" value="P:'de novo' pyrimidine nucleobase biosynthetic process"/>
    <property type="evidence" value="ECO:0007669"/>
    <property type="project" value="InterPro"/>
</dbReference>
<dbReference type="GO" id="GO:0044205">
    <property type="term" value="P:'de novo' UMP biosynthetic process"/>
    <property type="evidence" value="ECO:0007669"/>
    <property type="project" value="UniProtKB-UniRule"/>
</dbReference>
<dbReference type="GO" id="GO:0006541">
    <property type="term" value="P:glutamine metabolic process"/>
    <property type="evidence" value="ECO:0007669"/>
    <property type="project" value="InterPro"/>
</dbReference>
<dbReference type="GO" id="GO:0006526">
    <property type="term" value="P:L-arginine biosynthetic process"/>
    <property type="evidence" value="ECO:0007669"/>
    <property type="project" value="UniProtKB-UniRule"/>
</dbReference>
<dbReference type="CDD" id="cd01744">
    <property type="entry name" value="GATase1_CPSase"/>
    <property type="match status" value="1"/>
</dbReference>
<dbReference type="FunFam" id="3.40.50.880:FF:000018">
    <property type="entry name" value="Carbamoyl-phosphate synthase small chain"/>
    <property type="match status" value="1"/>
</dbReference>
<dbReference type="FunFam" id="3.50.30.20:FF:000001">
    <property type="entry name" value="Carbamoyl-phosphate synthase small chain"/>
    <property type="match status" value="1"/>
</dbReference>
<dbReference type="Gene3D" id="3.40.50.880">
    <property type="match status" value="1"/>
</dbReference>
<dbReference type="Gene3D" id="3.50.30.20">
    <property type="entry name" value="Carbamoyl-phosphate synthase small subunit, N-terminal domain"/>
    <property type="match status" value="1"/>
</dbReference>
<dbReference type="HAMAP" id="MF_01209">
    <property type="entry name" value="CPSase_S_chain"/>
    <property type="match status" value="1"/>
</dbReference>
<dbReference type="InterPro" id="IPR050472">
    <property type="entry name" value="Anth_synth/Amidotransfase"/>
</dbReference>
<dbReference type="InterPro" id="IPR006274">
    <property type="entry name" value="CarbamoylP_synth_ssu"/>
</dbReference>
<dbReference type="InterPro" id="IPR002474">
    <property type="entry name" value="CarbamoylP_synth_ssu_N"/>
</dbReference>
<dbReference type="InterPro" id="IPR036480">
    <property type="entry name" value="CarbP_synth_ssu_N_sf"/>
</dbReference>
<dbReference type="InterPro" id="IPR029062">
    <property type="entry name" value="Class_I_gatase-like"/>
</dbReference>
<dbReference type="InterPro" id="IPR035686">
    <property type="entry name" value="CPSase_GATase1"/>
</dbReference>
<dbReference type="InterPro" id="IPR017926">
    <property type="entry name" value="GATASE"/>
</dbReference>
<dbReference type="NCBIfam" id="TIGR01368">
    <property type="entry name" value="CPSaseIIsmall"/>
    <property type="match status" value="1"/>
</dbReference>
<dbReference type="NCBIfam" id="NF009475">
    <property type="entry name" value="PRK12838.1"/>
    <property type="match status" value="1"/>
</dbReference>
<dbReference type="PANTHER" id="PTHR43418:SF7">
    <property type="entry name" value="CARBAMOYL-PHOSPHATE SYNTHASE SMALL CHAIN"/>
    <property type="match status" value="1"/>
</dbReference>
<dbReference type="PANTHER" id="PTHR43418">
    <property type="entry name" value="MULTIFUNCTIONAL TRYPTOPHAN BIOSYNTHESIS PROTEIN-RELATED"/>
    <property type="match status" value="1"/>
</dbReference>
<dbReference type="Pfam" id="PF00988">
    <property type="entry name" value="CPSase_sm_chain"/>
    <property type="match status" value="1"/>
</dbReference>
<dbReference type="Pfam" id="PF00117">
    <property type="entry name" value="GATase"/>
    <property type="match status" value="1"/>
</dbReference>
<dbReference type="PRINTS" id="PR00097">
    <property type="entry name" value="ANTSNTHASEII"/>
</dbReference>
<dbReference type="PRINTS" id="PR00099">
    <property type="entry name" value="CPSGATASE"/>
</dbReference>
<dbReference type="PRINTS" id="PR00096">
    <property type="entry name" value="GATASE"/>
</dbReference>
<dbReference type="SMART" id="SM01097">
    <property type="entry name" value="CPSase_sm_chain"/>
    <property type="match status" value="1"/>
</dbReference>
<dbReference type="SUPFAM" id="SSF52021">
    <property type="entry name" value="Carbamoyl phosphate synthetase, small subunit N-terminal domain"/>
    <property type="match status" value="1"/>
</dbReference>
<dbReference type="SUPFAM" id="SSF52317">
    <property type="entry name" value="Class I glutamine amidotransferase-like"/>
    <property type="match status" value="1"/>
</dbReference>
<dbReference type="PROSITE" id="PS51273">
    <property type="entry name" value="GATASE_TYPE_1"/>
    <property type="match status" value="1"/>
</dbReference>
<feature type="chain" id="PRO_0000112295" description="Carbamoyl phosphate synthase small chain">
    <location>
        <begin position="1"/>
        <end position="373"/>
    </location>
</feature>
<feature type="domain" description="Glutamine amidotransferase type-1" evidence="1">
    <location>
        <begin position="182"/>
        <end position="373"/>
    </location>
</feature>
<feature type="region of interest" description="CPSase" evidence="1">
    <location>
        <begin position="1"/>
        <end position="179"/>
    </location>
</feature>
<feature type="active site" description="Nucleophile" evidence="1">
    <location>
        <position position="258"/>
    </location>
</feature>
<feature type="active site" evidence="1">
    <location>
        <position position="348"/>
    </location>
</feature>
<feature type="active site" evidence="1">
    <location>
        <position position="350"/>
    </location>
</feature>
<feature type="binding site" evidence="1">
    <location>
        <position position="47"/>
    </location>
    <ligand>
        <name>L-glutamine</name>
        <dbReference type="ChEBI" id="CHEBI:58359"/>
    </ligand>
</feature>
<feature type="binding site" evidence="1">
    <location>
        <position position="230"/>
    </location>
    <ligand>
        <name>L-glutamine</name>
        <dbReference type="ChEBI" id="CHEBI:58359"/>
    </ligand>
</feature>
<feature type="binding site" evidence="1">
    <location>
        <position position="232"/>
    </location>
    <ligand>
        <name>L-glutamine</name>
        <dbReference type="ChEBI" id="CHEBI:58359"/>
    </ligand>
</feature>
<feature type="binding site" evidence="1">
    <location>
        <position position="259"/>
    </location>
    <ligand>
        <name>L-glutamine</name>
        <dbReference type="ChEBI" id="CHEBI:58359"/>
    </ligand>
</feature>
<feature type="binding site" evidence="1">
    <location>
        <position position="262"/>
    </location>
    <ligand>
        <name>L-glutamine</name>
        <dbReference type="ChEBI" id="CHEBI:58359"/>
    </ligand>
</feature>
<feature type="binding site" evidence="1">
    <location>
        <position position="300"/>
    </location>
    <ligand>
        <name>L-glutamine</name>
        <dbReference type="ChEBI" id="CHEBI:58359"/>
    </ligand>
</feature>
<feature type="binding site" evidence="1">
    <location>
        <position position="302"/>
    </location>
    <ligand>
        <name>L-glutamine</name>
        <dbReference type="ChEBI" id="CHEBI:58359"/>
    </ligand>
</feature>
<feature type="binding site" evidence="1">
    <location>
        <position position="303"/>
    </location>
    <ligand>
        <name>L-glutamine</name>
        <dbReference type="ChEBI" id="CHEBI:58359"/>
    </ligand>
</feature>
<accession>Q741H2</accession>
<evidence type="ECO:0000255" key="1">
    <source>
        <dbReference type="HAMAP-Rule" id="MF_01209"/>
    </source>
</evidence>
<sequence>MSGKAQLVLEDGRVFTGTAFGAIGQTLGEAVFSTGMSGYQETLTDPSYHRQIVVATAPQIGNTGWNGEDAESRGDKIWVAGYAVRDPSPRVSNWRATGSLEDELIRQRIVGIARIDTRAVVRHLRTRGSMKAGVFSGDALADPDELVQRVRGQQSMLGADLAGEVSTPDAYIVEPEGPPRFTVAALDLGIKTNTPRNFARRGIRSHVLPSSATFEQIADLRPDGVFLSNGPGDPATADHIVAVTREVLGAGIPLFGICFGNQILGRALGLSTYKMVFGHRGINIPVIDHATGRVAVTAQNHGFALQGEAGQSFDTPFGAAVVSHTCANDGVVEGVKLADGRAFSVQYHPEAAAGPHDANYLFDQFIELMEGDR</sequence>
<comment type="function">
    <text evidence="1">Small subunit of the glutamine-dependent carbamoyl phosphate synthetase (CPSase). CPSase catalyzes the formation of carbamoyl phosphate from the ammonia moiety of glutamine, carbonate, and phosphate donated by ATP, constituting the first step of 2 biosynthetic pathways, one leading to arginine and/or urea and the other to pyrimidine nucleotides. The small subunit (glutamine amidotransferase) binds and cleaves glutamine to supply the large subunit with the substrate ammonia.</text>
</comment>
<comment type="catalytic activity">
    <reaction evidence="1">
        <text>hydrogencarbonate + L-glutamine + 2 ATP + H2O = carbamoyl phosphate + L-glutamate + 2 ADP + phosphate + 2 H(+)</text>
        <dbReference type="Rhea" id="RHEA:18633"/>
        <dbReference type="ChEBI" id="CHEBI:15377"/>
        <dbReference type="ChEBI" id="CHEBI:15378"/>
        <dbReference type="ChEBI" id="CHEBI:17544"/>
        <dbReference type="ChEBI" id="CHEBI:29985"/>
        <dbReference type="ChEBI" id="CHEBI:30616"/>
        <dbReference type="ChEBI" id="CHEBI:43474"/>
        <dbReference type="ChEBI" id="CHEBI:58228"/>
        <dbReference type="ChEBI" id="CHEBI:58359"/>
        <dbReference type="ChEBI" id="CHEBI:456216"/>
        <dbReference type="EC" id="6.3.5.5"/>
    </reaction>
</comment>
<comment type="catalytic activity">
    <molecule>Carbamoyl phosphate synthase small chain</molecule>
    <reaction evidence="1">
        <text>L-glutamine + H2O = L-glutamate + NH4(+)</text>
        <dbReference type="Rhea" id="RHEA:15889"/>
        <dbReference type="ChEBI" id="CHEBI:15377"/>
        <dbReference type="ChEBI" id="CHEBI:28938"/>
        <dbReference type="ChEBI" id="CHEBI:29985"/>
        <dbReference type="ChEBI" id="CHEBI:58359"/>
    </reaction>
</comment>
<comment type="pathway">
    <text evidence="1">Amino-acid biosynthesis; L-arginine biosynthesis; carbamoyl phosphate from bicarbonate: step 1/1.</text>
</comment>
<comment type="pathway">
    <text evidence="1">Pyrimidine metabolism; UMP biosynthesis via de novo pathway; (S)-dihydroorotate from bicarbonate: step 1/3.</text>
</comment>
<comment type="subunit">
    <text evidence="1">Composed of two chains; the small (or glutamine) chain promotes the hydrolysis of glutamine to ammonia, which is used by the large (or ammonia) chain to synthesize carbamoyl phosphate. Tetramer of heterodimers (alpha,beta)4.</text>
</comment>
<comment type="similarity">
    <text evidence="1">Belongs to the CarA family.</text>
</comment>
<keyword id="KW-0028">Amino-acid biosynthesis</keyword>
<keyword id="KW-0055">Arginine biosynthesis</keyword>
<keyword id="KW-0067">ATP-binding</keyword>
<keyword id="KW-0315">Glutamine amidotransferase</keyword>
<keyword id="KW-0436">Ligase</keyword>
<keyword id="KW-0547">Nucleotide-binding</keyword>
<keyword id="KW-0665">Pyrimidine biosynthesis</keyword>
<keyword id="KW-1185">Reference proteome</keyword>